<keyword id="KW-0002">3D-structure</keyword>
<keyword id="KW-0106">Calcium</keyword>
<keyword id="KW-0972">Capsule biogenesis/degradation</keyword>
<keyword id="KW-0119">Carbohydrate metabolism</keyword>
<keyword id="KW-0320">Glycogen biosynthesis</keyword>
<keyword id="KW-0321">Glycogen metabolism</keyword>
<keyword id="KW-0326">Glycosidase</keyword>
<keyword id="KW-0378">Hydrolase</keyword>
<keyword id="KW-0413">Isomerase</keyword>
<keyword id="KW-0479">Metal-binding</keyword>
<keyword id="KW-0624">Polysaccharide degradation</keyword>
<keyword id="KW-1185">Reference proteome</keyword>
<gene>
    <name evidence="7" type="primary">treS</name>
    <name type="ordered locus">Rv0126</name>
</gene>
<reference key="1">
    <citation type="journal article" date="1998" name="Nature">
        <title>Deciphering the biology of Mycobacterium tuberculosis from the complete genome sequence.</title>
        <authorList>
            <person name="Cole S.T."/>
            <person name="Brosch R."/>
            <person name="Parkhill J."/>
            <person name="Garnier T."/>
            <person name="Churcher C.M."/>
            <person name="Harris D.E."/>
            <person name="Gordon S.V."/>
            <person name="Eiglmeier K."/>
            <person name="Gas S."/>
            <person name="Barry C.E. III"/>
            <person name="Tekaia F."/>
            <person name="Badcock K."/>
            <person name="Basham D."/>
            <person name="Brown D."/>
            <person name="Chillingworth T."/>
            <person name="Connor R."/>
            <person name="Davies R.M."/>
            <person name="Devlin K."/>
            <person name="Feltwell T."/>
            <person name="Gentles S."/>
            <person name="Hamlin N."/>
            <person name="Holroyd S."/>
            <person name="Hornsby T."/>
            <person name="Jagels K."/>
            <person name="Krogh A."/>
            <person name="McLean J."/>
            <person name="Moule S."/>
            <person name="Murphy L.D."/>
            <person name="Oliver S."/>
            <person name="Osborne J."/>
            <person name="Quail M.A."/>
            <person name="Rajandream M.A."/>
            <person name="Rogers J."/>
            <person name="Rutter S."/>
            <person name="Seeger K."/>
            <person name="Skelton S."/>
            <person name="Squares S."/>
            <person name="Squares R."/>
            <person name="Sulston J.E."/>
            <person name="Taylor K."/>
            <person name="Whitehead S."/>
            <person name="Barrell B.G."/>
        </authorList>
    </citation>
    <scope>NUCLEOTIDE SEQUENCE [LARGE SCALE GENOMIC DNA]</scope>
    <source>
        <strain>ATCC 25618 / H37Rv</strain>
    </source>
</reference>
<reference key="2">
    <citation type="journal article" date="2008" name="BMC Syst. Biol.">
        <title>targetTB: a target identification pipeline for Mycobacterium tuberculosis through an interactome, reactome and genome-scale structural analysis.</title>
        <authorList>
            <person name="Raman K."/>
            <person name="Yeturu K."/>
            <person name="Chandra N."/>
        </authorList>
    </citation>
    <scope>IDENTIFICATION AS A DRUG TARGET [LARGE SCALE ANALYSIS]</scope>
</reference>
<reference key="3">
    <citation type="journal article" date="2008" name="FEBS J.">
        <title>Trehalose synthase converts glycogen to trehalose.</title>
        <authorList>
            <person name="Pan Y.T."/>
            <person name="Carroll J.D."/>
            <person name="Asano N."/>
            <person name="Pastuszak I."/>
            <person name="Edavana V.K."/>
            <person name="Elbein A.D."/>
        </authorList>
    </citation>
    <scope>FUNCTION AS A TREHALOSE SYNTHASE AND AMYLASE</scope>
    <scope>CATALYTIC ACTIVITY</scope>
</reference>
<reference key="4">
    <citation type="journal article" date="2010" name="Nat. Chem. Biol.">
        <title>Self-poisoning of Mycobacterium tuberculosis by targeting GlgE in an alpha-glucan pathway.</title>
        <authorList>
            <person name="Kalscheuer R."/>
            <person name="Syson K."/>
            <person name="Veeraraghavan U."/>
            <person name="Weinrick B."/>
            <person name="Biermann K.E."/>
            <person name="Liu Z."/>
            <person name="Sacchettini J.C."/>
            <person name="Besra G."/>
            <person name="Bornemann S."/>
            <person name="Jacobs W.R. Jr."/>
        </authorList>
    </citation>
    <scope>DISRUPTION PHENOTYPE</scope>
    <scope>SYNTHETIC LETHALITY</scope>
    <source>
        <strain>ATCC 25618 / H37Rv</strain>
    </source>
</reference>
<reference key="5">
    <citation type="journal article" date="2011" name="Mol. Cell. Proteomics">
        <title>Proteogenomic analysis of Mycobacterium tuberculosis by high resolution mass spectrometry.</title>
        <authorList>
            <person name="Kelkar D.S."/>
            <person name="Kumar D."/>
            <person name="Kumar P."/>
            <person name="Balakrishnan L."/>
            <person name="Muthusamy B."/>
            <person name="Yadav A.K."/>
            <person name="Shrivastava P."/>
            <person name="Marimuthu A."/>
            <person name="Anand S."/>
            <person name="Sundaram H."/>
            <person name="Kingsbury R."/>
            <person name="Harsha H.C."/>
            <person name="Nair B."/>
            <person name="Prasad T.S."/>
            <person name="Chauhan D.S."/>
            <person name="Katoch K."/>
            <person name="Katoch V.M."/>
            <person name="Kumar P."/>
            <person name="Chaerkady R."/>
            <person name="Ramachandran S."/>
            <person name="Dash D."/>
            <person name="Pandey A."/>
        </authorList>
    </citation>
    <scope>IDENTIFICATION BY MASS SPECTROMETRY [LARGE SCALE ANALYSIS]</scope>
    <source>
        <strain>ATCC 25618 / H37Rv</strain>
    </source>
</reference>
<reference key="6">
    <citation type="journal article" date="2016" name="PLoS Pathog.">
        <title>Metabolic network for the biosynthesis of intra- and extracellular alpha-glucans required for virulence of Mycobacterium tuberculosis.</title>
        <authorList>
            <person name="Koliwer-Brandl H."/>
            <person name="Syson K."/>
            <person name="van de Weerd R."/>
            <person name="Chandra G."/>
            <person name="Appelmelk B."/>
            <person name="Alber M."/>
            <person name="Ioerger T.R."/>
            <person name="Jacobs W.R. Jr."/>
            <person name="Geurtsen J."/>
            <person name="Bornemann S."/>
            <person name="Kalscheuer R."/>
        </authorList>
    </citation>
    <scope>FUNCTION</scope>
    <scope>DISRUPTION PHENOTYPE</scope>
    <scope>PATHWAY</scope>
</reference>
<evidence type="ECO:0000250" key="1">
    <source>
        <dbReference type="UniProtKB" id="A0R6E0"/>
    </source>
</evidence>
<evidence type="ECO:0000250" key="2">
    <source>
        <dbReference type="UniProtKB" id="Q9ZEU2"/>
    </source>
</evidence>
<evidence type="ECO:0000256" key="3">
    <source>
        <dbReference type="SAM" id="MobiDB-lite"/>
    </source>
</evidence>
<evidence type="ECO:0000269" key="4">
    <source>
    </source>
</evidence>
<evidence type="ECO:0000269" key="5">
    <source>
    </source>
</evidence>
<evidence type="ECO:0000269" key="6">
    <source>
    </source>
</evidence>
<evidence type="ECO:0000303" key="7">
    <source>
    </source>
</evidence>
<evidence type="ECO:0000305" key="8"/>
<evidence type="ECO:0007829" key="9">
    <source>
        <dbReference type="PDB" id="8UZH"/>
    </source>
</evidence>
<dbReference type="EC" id="3.2.1.1" evidence="4"/>
<dbReference type="EC" id="5.4.99.16" evidence="4"/>
<dbReference type="EMBL" id="AL123456">
    <property type="protein sequence ID" value="CCP42851.1"/>
    <property type="molecule type" value="Genomic_DNA"/>
</dbReference>
<dbReference type="PIR" id="G70983">
    <property type="entry name" value="G70983"/>
</dbReference>
<dbReference type="RefSeq" id="NP_214640.1">
    <property type="nucleotide sequence ID" value="NC_000962.3"/>
</dbReference>
<dbReference type="RefSeq" id="WP_003400893.1">
    <property type="nucleotide sequence ID" value="NZ_NVQJ01000001.1"/>
</dbReference>
<dbReference type="PDB" id="8UQV">
    <property type="method" value="EM"/>
    <property type="resolution" value="3.60 A"/>
    <property type="chains" value="A/B/C/D=12-586"/>
</dbReference>
<dbReference type="PDB" id="8UZH">
    <property type="method" value="X-ray"/>
    <property type="resolution" value="2.80 A"/>
    <property type="chains" value="A/B=13-601"/>
</dbReference>
<dbReference type="PDBsum" id="8UQV"/>
<dbReference type="PDBsum" id="8UZH"/>
<dbReference type="SMR" id="P9WQ19"/>
<dbReference type="FunCoup" id="P9WQ19">
    <property type="interactions" value="25"/>
</dbReference>
<dbReference type="STRING" id="83332.Rv0126"/>
<dbReference type="PaxDb" id="83332-Rv0126"/>
<dbReference type="GeneID" id="45424092"/>
<dbReference type="GeneID" id="886881"/>
<dbReference type="KEGG" id="mtu:Rv0126"/>
<dbReference type="KEGG" id="mtv:RVBD_0126"/>
<dbReference type="TubercuList" id="Rv0126"/>
<dbReference type="eggNOG" id="COG0366">
    <property type="taxonomic scope" value="Bacteria"/>
</dbReference>
<dbReference type="InParanoid" id="P9WQ19"/>
<dbReference type="OrthoDB" id="9043248at2"/>
<dbReference type="PhylomeDB" id="P9WQ19"/>
<dbReference type="BRENDA" id="5.4.99.16">
    <property type="organism ID" value="3445"/>
</dbReference>
<dbReference type="Reactome" id="R-MTU-868688">
    <property type="pathway name" value="Trehalose biosynthesis"/>
</dbReference>
<dbReference type="UniPathway" id="UPA00164"/>
<dbReference type="UniPathway" id="UPA00934"/>
<dbReference type="PHI-base" id="PHI:6732"/>
<dbReference type="Proteomes" id="UP000001584">
    <property type="component" value="Chromosome"/>
</dbReference>
<dbReference type="GO" id="GO:0005829">
    <property type="term" value="C:cytosol"/>
    <property type="evidence" value="ECO:0000304"/>
    <property type="project" value="Reactome"/>
</dbReference>
<dbReference type="GO" id="GO:0005886">
    <property type="term" value="C:plasma membrane"/>
    <property type="evidence" value="ECO:0007005"/>
    <property type="project" value="MTBBASE"/>
</dbReference>
<dbReference type="GO" id="GO:0004556">
    <property type="term" value="F:alpha-amylase activity"/>
    <property type="evidence" value="ECO:0000250"/>
    <property type="project" value="UniProtKB"/>
</dbReference>
<dbReference type="GO" id="GO:0016161">
    <property type="term" value="F:beta-amylase activity"/>
    <property type="evidence" value="ECO:0000314"/>
    <property type="project" value="MTBBASE"/>
</dbReference>
<dbReference type="GO" id="GO:0005509">
    <property type="term" value="F:calcium ion binding"/>
    <property type="evidence" value="ECO:0000250"/>
    <property type="project" value="UniProtKB"/>
</dbReference>
<dbReference type="GO" id="GO:0047471">
    <property type="term" value="F:maltose alpha-D-glucosyltransferase activity"/>
    <property type="evidence" value="ECO:0000314"/>
    <property type="project" value="MTBBASE"/>
</dbReference>
<dbReference type="GO" id="GO:0045227">
    <property type="term" value="P:capsule polysaccharide biosynthetic process"/>
    <property type="evidence" value="ECO:0007669"/>
    <property type="project" value="UniProtKB-UniPathway"/>
</dbReference>
<dbReference type="GO" id="GO:0005978">
    <property type="term" value="P:glycogen biosynthetic process"/>
    <property type="evidence" value="ECO:0000315"/>
    <property type="project" value="MTBBASE"/>
</dbReference>
<dbReference type="GO" id="GO:0005977">
    <property type="term" value="P:glycogen metabolic process"/>
    <property type="evidence" value="ECO:0000250"/>
    <property type="project" value="UniProtKB"/>
</dbReference>
<dbReference type="GO" id="GO:0000023">
    <property type="term" value="P:maltose metabolic process"/>
    <property type="evidence" value="ECO:0000250"/>
    <property type="project" value="UniProtKB"/>
</dbReference>
<dbReference type="GO" id="GO:0000272">
    <property type="term" value="P:polysaccharide catabolic process"/>
    <property type="evidence" value="ECO:0007669"/>
    <property type="project" value="UniProtKB-KW"/>
</dbReference>
<dbReference type="GO" id="GO:0005992">
    <property type="term" value="P:trehalose biosynthetic process"/>
    <property type="evidence" value="ECO:0000315"/>
    <property type="project" value="MTBBASE"/>
</dbReference>
<dbReference type="GO" id="GO:0005991">
    <property type="term" value="P:trehalose metabolic process"/>
    <property type="evidence" value="ECO:0000250"/>
    <property type="project" value="UniProtKB"/>
</dbReference>
<dbReference type="CDD" id="cd11334">
    <property type="entry name" value="AmyAc_TreS"/>
    <property type="match status" value="1"/>
</dbReference>
<dbReference type="FunFam" id="3.20.20.80:FF:000055">
    <property type="entry name" value="Trehalose synthase"/>
    <property type="match status" value="1"/>
</dbReference>
<dbReference type="FunFam" id="2.60.40.1180:FF:000054">
    <property type="entry name" value="Trehalose synthase/amylase TreS"/>
    <property type="match status" value="1"/>
</dbReference>
<dbReference type="Gene3D" id="3.20.20.80">
    <property type="entry name" value="Glycosidases"/>
    <property type="match status" value="1"/>
</dbReference>
<dbReference type="Gene3D" id="2.60.40.1180">
    <property type="entry name" value="Golgi alpha-mannosidase II"/>
    <property type="match status" value="1"/>
</dbReference>
<dbReference type="Gene3D" id="3.90.400.10">
    <property type="entry name" value="Oligo-1,6-glucosidase, Domain 2"/>
    <property type="match status" value="1"/>
</dbReference>
<dbReference type="InterPro" id="IPR006047">
    <property type="entry name" value="Glyco_hydro_13_cat_dom"/>
</dbReference>
<dbReference type="InterPro" id="IPR013780">
    <property type="entry name" value="Glyco_hydro_b"/>
</dbReference>
<dbReference type="InterPro" id="IPR017853">
    <property type="entry name" value="Glycoside_hydrolase_SF"/>
</dbReference>
<dbReference type="InterPro" id="IPR032091">
    <property type="entry name" value="Malt_amylase-like_C"/>
</dbReference>
<dbReference type="InterPro" id="IPR045857">
    <property type="entry name" value="O16G_dom_2"/>
</dbReference>
<dbReference type="InterPro" id="IPR012810">
    <property type="entry name" value="TreS/a-amylase_N"/>
</dbReference>
<dbReference type="NCBIfam" id="TIGR02456">
    <property type="entry name" value="treS_nterm"/>
    <property type="match status" value="1"/>
</dbReference>
<dbReference type="PANTHER" id="PTHR10357">
    <property type="entry name" value="ALPHA-AMYLASE FAMILY MEMBER"/>
    <property type="match status" value="1"/>
</dbReference>
<dbReference type="PANTHER" id="PTHR10357:SF219">
    <property type="entry name" value="MALTOSE ALPHA-D-GLUCOSYLTRANSFERASE"/>
    <property type="match status" value="1"/>
</dbReference>
<dbReference type="Pfam" id="PF00128">
    <property type="entry name" value="Alpha-amylase"/>
    <property type="match status" value="1"/>
</dbReference>
<dbReference type="Pfam" id="PF16657">
    <property type="entry name" value="Malt_amylase_C"/>
    <property type="match status" value="1"/>
</dbReference>
<dbReference type="SMART" id="SM00642">
    <property type="entry name" value="Aamy"/>
    <property type="match status" value="1"/>
</dbReference>
<dbReference type="SUPFAM" id="SSF51445">
    <property type="entry name" value="(Trans)glycosidases"/>
    <property type="match status" value="1"/>
</dbReference>
<dbReference type="SUPFAM" id="SSF51011">
    <property type="entry name" value="Glycosyl hydrolase domain"/>
    <property type="match status" value="1"/>
</dbReference>
<proteinExistence type="evidence at protein level"/>
<comment type="function">
    <text evidence="4 6">Catalyzes the reversible interconversion of maltose and trehalose by transglucosylation (PubMed:18505459). Also displays amylase activity, catalyzing the endohydrolysis of (1-&gt;4)-alpha-D-glucosidic linkages in glycogen and maltooligosaccharides such as maltoheptaose, to produce maltose which then can be converted to trehalose (PubMed:18505459). TreS plays a key role in the utilization of trehalose for the production of glycogen and alpha-glucan via the TreS-Pep2 branch involved in the biosynthesis of maltose-1-phosphate (M1P) (PubMed:18505459, PubMed:27513637). Might also function as a sensor and/or regulator of trehalose levels within the cell (PubMed:18505459). Thus, when trehalose levels in the cell become dangerously low, TreS could expedite the conversion of glycogen to maltose via its amylase activity and then convert the maltose to trehalose; but this enzyme also could expedite or promote the conversion of trehalose to glycogen when cytoplasmic trehalose levels become too high (PubMed:18505459).</text>
</comment>
<comment type="catalytic activity">
    <reaction evidence="4">
        <text>D-maltose = alpha,alpha-trehalose</text>
        <dbReference type="Rhea" id="RHEA:15145"/>
        <dbReference type="ChEBI" id="CHEBI:16551"/>
        <dbReference type="ChEBI" id="CHEBI:17306"/>
        <dbReference type="EC" id="5.4.99.16"/>
    </reaction>
</comment>
<comment type="catalytic activity">
    <reaction evidence="4">
        <text>Endohydrolysis of (1-&gt;4)-alpha-D-glucosidic linkages in polysaccharides containing three or more (1-&gt;4)-alpha-linked D-glucose units.</text>
        <dbReference type="EC" id="3.2.1.1"/>
    </reaction>
</comment>
<comment type="pathway">
    <text evidence="6">Glycan biosynthesis; glycogen biosynthesis.</text>
</comment>
<comment type="pathway">
    <text evidence="6">Capsule biogenesis; capsule polysaccharide biosynthesis.</text>
</comment>
<comment type="subunit">
    <text evidence="1">Homohexamer.</text>
</comment>
<comment type="disruption phenotype">
    <text evidence="5 6">Cells lacking this gene are as virulent as wild-type in mice, however also show a profound impact on intracellular and capsular glucan (PubMed:20305657, PubMed:27513637). It is not possible to inactivate Rv3032 in a mutant lacking treS, suggesting the joint essentiality of the different alpha-(1-&gt;4)-glucans biosynthesis pathways involving these two genes (PubMed:20305657). Combined inactivation of glgM and treS results in absence of alpha-glucan (PubMed:27513637). Combined inactivation of treS and glgC results in absence of alpha-glucan content and is significantly attenuated for growth in the lung and spleen of BALB/C mice during both the acute and chronic phase of infection (PubMed:27513637).</text>
</comment>
<comment type="miscellaneous">
    <text>Was identified as a high-confidence drug target.</text>
</comment>
<comment type="miscellaneous">
    <text evidence="6">Maltose-1-phosphate (M1P), the building block required for alpha-glucan production, is generated by two alternative routes: the TreS-Pep2 branch and the GlgC-GlgM branch, however it seems that TreS-Pep2 branch provides most of M1P for the GlgE pathway in M.tuberculosis.</text>
</comment>
<comment type="similarity">
    <text evidence="8">Belongs to the glycosyl hydrolase 13 family. TreS subfamily.</text>
</comment>
<feature type="chain" id="PRO_0000412906" description="Trehalose synthase/amylase TreS">
    <location>
        <begin position="1"/>
        <end position="601"/>
    </location>
</feature>
<feature type="region of interest" description="Disordered" evidence="3">
    <location>
        <begin position="1"/>
        <end position="21"/>
    </location>
</feature>
<feature type="active site" description="Nucleophile" evidence="1">
    <location>
        <position position="238"/>
    </location>
</feature>
<feature type="active site" description="Proton donor" evidence="2">
    <location>
        <position position="280"/>
    </location>
</feature>
<feature type="binding site" evidence="2">
    <location>
        <position position="98"/>
    </location>
    <ligand>
        <name>substrate</name>
    </ligand>
</feature>
<feature type="binding site" evidence="1">
    <location>
        <position position="140"/>
    </location>
    <ligand>
        <name>Ca(2+)</name>
        <dbReference type="ChEBI" id="CHEBI:29108"/>
    </ligand>
</feature>
<feature type="binding site" evidence="2">
    <location>
        <position position="141"/>
    </location>
    <ligand>
        <name>substrate</name>
    </ligand>
</feature>
<feature type="binding site" evidence="2">
    <location>
        <position position="206"/>
    </location>
    <ligand>
        <name>substrate</name>
    </ligand>
</feature>
<feature type="binding site" evidence="1">
    <location>
        <position position="208"/>
    </location>
    <ligand>
        <name>Ca(2+)</name>
        <dbReference type="ChEBI" id="CHEBI:29108"/>
    </ligand>
</feature>
<feature type="binding site" evidence="2">
    <location>
        <position position="236"/>
    </location>
    <ligand>
        <name>substrate</name>
    </ligand>
</feature>
<feature type="binding site" evidence="1">
    <location>
        <position position="242"/>
    </location>
    <ligand>
        <name>Ca(2+)</name>
        <dbReference type="ChEBI" id="CHEBI:29108"/>
    </ligand>
</feature>
<feature type="binding site" evidence="1">
    <location>
        <position position="243"/>
    </location>
    <ligand>
        <name>Ca(2+)</name>
        <dbReference type="ChEBI" id="CHEBI:29108"/>
    </ligand>
</feature>
<feature type="binding site" evidence="1">
    <location>
        <position position="245"/>
    </location>
    <ligand>
        <name>Ca(2+)</name>
        <dbReference type="ChEBI" id="CHEBI:29108"/>
    </ligand>
</feature>
<feature type="binding site" evidence="2">
    <location>
        <position position="349"/>
    </location>
    <ligand>
        <name>substrate</name>
    </ligand>
</feature>
<feature type="binding site" evidence="2">
    <location>
        <position position="350"/>
    </location>
    <ligand>
        <name>substrate</name>
    </ligand>
</feature>
<feature type="strand" evidence="9">
    <location>
        <begin position="17"/>
        <end position="19"/>
    </location>
</feature>
<feature type="strand" evidence="9">
    <location>
        <begin position="22"/>
        <end position="24"/>
    </location>
</feature>
<feature type="helix" evidence="9">
    <location>
        <begin position="28"/>
        <end position="30"/>
    </location>
</feature>
<feature type="turn" evidence="9">
    <location>
        <begin position="41"/>
        <end position="46"/>
    </location>
</feature>
<feature type="strand" evidence="9">
    <location>
        <begin position="49"/>
        <end position="51"/>
    </location>
</feature>
<feature type="turn" evidence="9">
    <location>
        <begin position="54"/>
        <end position="56"/>
    </location>
</feature>
<feature type="strand" evidence="9">
    <location>
        <begin position="60"/>
        <end position="65"/>
    </location>
</feature>
<feature type="helix" evidence="9">
    <location>
        <begin position="68"/>
        <end position="73"/>
    </location>
</feature>
<feature type="helix" evidence="9">
    <location>
        <begin position="75"/>
        <end position="81"/>
    </location>
</feature>
<feature type="strand" evidence="9">
    <location>
        <begin position="85"/>
        <end position="88"/>
    </location>
</feature>
<feature type="strand" evidence="9">
    <location>
        <begin position="104"/>
        <end position="109"/>
    </location>
</feature>
<feature type="turn" evidence="9">
    <location>
        <begin position="111"/>
        <end position="113"/>
    </location>
</feature>
<feature type="helix" evidence="9">
    <location>
        <begin position="116"/>
        <end position="127"/>
    </location>
</feature>
<feature type="turn" evidence="9">
    <location>
        <begin position="128"/>
        <end position="130"/>
    </location>
</feature>
<feature type="strand" evidence="9">
    <location>
        <begin position="132"/>
        <end position="138"/>
    </location>
</feature>
<feature type="helix" evidence="9">
    <location>
        <begin position="147"/>
        <end position="152"/>
    </location>
</feature>
<feature type="turn" evidence="9">
    <location>
        <begin position="159"/>
        <end position="162"/>
    </location>
</feature>
<feature type="strand" evidence="9">
    <location>
        <begin position="166"/>
        <end position="168"/>
    </location>
</feature>
<feature type="turn" evidence="9">
    <location>
        <begin position="181"/>
        <end position="183"/>
    </location>
</feature>
<feature type="strand" evidence="9">
    <location>
        <begin position="187"/>
        <end position="190"/>
    </location>
</feature>
<feature type="turn" evidence="9">
    <location>
        <begin position="192"/>
        <end position="194"/>
    </location>
</feature>
<feature type="strand" evidence="9">
    <location>
        <begin position="196"/>
        <end position="199"/>
    </location>
</feature>
<feature type="helix" evidence="9">
    <location>
        <begin position="214"/>
        <end position="230"/>
    </location>
</feature>
<feature type="strand" evidence="9">
    <location>
        <begin position="234"/>
        <end position="239"/>
    </location>
</feature>
<feature type="helix" evidence="9">
    <location>
        <begin position="240"/>
        <end position="242"/>
    </location>
</feature>
<feature type="strand" evidence="9">
    <location>
        <begin position="251"/>
        <end position="253"/>
    </location>
</feature>
<feature type="helix" evidence="9">
    <location>
        <begin position="255"/>
        <end position="271"/>
    </location>
</feature>
<feature type="strand" evidence="9">
    <location>
        <begin position="276"/>
        <end position="279"/>
    </location>
</feature>
<feature type="helix" evidence="9">
    <location>
        <begin position="289"/>
        <end position="292"/>
    </location>
</feature>
<feature type="turn" evidence="9">
    <location>
        <begin position="295"/>
        <end position="298"/>
    </location>
</feature>
<feature type="strand" evidence="9">
    <location>
        <begin position="303"/>
        <end position="306"/>
    </location>
</feature>
<feature type="helix" evidence="9">
    <location>
        <begin position="310"/>
        <end position="320"/>
    </location>
</feature>
<feature type="helix" evidence="9">
    <location>
        <begin position="324"/>
        <end position="330"/>
    </location>
</feature>
<feature type="strand" evidence="9">
    <location>
        <begin position="341"/>
        <end position="346"/>
    </location>
</feature>
<feature type="strand" evidence="9">
    <location>
        <begin position="351"/>
        <end position="353"/>
    </location>
</feature>
<feature type="turn" evidence="9">
    <location>
        <begin position="360"/>
        <end position="362"/>
    </location>
</feature>
<feature type="turn" evidence="9">
    <location>
        <begin position="364"/>
        <end position="368"/>
    </location>
</feature>
<feature type="helix" evidence="9">
    <location>
        <begin position="369"/>
        <end position="371"/>
    </location>
</feature>
<feature type="helix" evidence="9">
    <location>
        <begin position="373"/>
        <end position="377"/>
    </location>
</feature>
<feature type="strand" evidence="9">
    <location>
        <begin position="378"/>
        <end position="380"/>
    </location>
</feature>
<feature type="helix" evidence="9">
    <location>
        <begin position="385"/>
        <end position="388"/>
    </location>
</feature>
<feature type="turn" evidence="9">
    <location>
        <begin position="389"/>
        <end position="391"/>
    </location>
</feature>
<feature type="helix" evidence="9">
    <location>
        <begin position="393"/>
        <end position="403"/>
    </location>
</feature>
<feature type="strand" evidence="9">
    <location>
        <begin position="406"/>
        <end position="413"/>
    </location>
</feature>
<feature type="turn" evidence="9">
    <location>
        <begin position="414"/>
        <end position="419"/>
    </location>
</feature>
<feature type="turn" evidence="9">
    <location>
        <begin position="428"/>
        <end position="432"/>
    </location>
</feature>
<feature type="helix" evidence="9">
    <location>
        <begin position="442"/>
        <end position="445"/>
    </location>
</feature>
<feature type="helix" evidence="9">
    <location>
        <begin position="451"/>
        <end position="453"/>
    </location>
</feature>
<feature type="turn" evidence="9">
    <location>
        <begin position="462"/>
        <end position="464"/>
    </location>
</feature>
<feature type="turn" evidence="9">
    <location>
        <begin position="466"/>
        <end position="468"/>
    </location>
</feature>
<feature type="helix" evidence="9">
    <location>
        <begin position="471"/>
        <end position="476"/>
    </location>
</feature>
<feature type="helix" evidence="9">
    <location>
        <begin position="481"/>
        <end position="493"/>
    </location>
</feature>
<feature type="helix" evidence="9">
    <location>
        <begin position="497"/>
        <end position="500"/>
    </location>
</feature>
<feature type="strand" evidence="9">
    <location>
        <begin position="501"/>
        <end position="505"/>
    </location>
</feature>
<feature type="strand" evidence="9">
    <location>
        <begin position="513"/>
        <end position="519"/>
    </location>
</feature>
<feature type="strand" evidence="9">
    <location>
        <begin position="527"/>
        <end position="533"/>
    </location>
</feature>
<feature type="strand" evidence="9">
    <location>
        <begin position="535"/>
        <end position="537"/>
    </location>
</feature>
<feature type="strand" evidence="9">
    <location>
        <begin position="539"/>
        <end position="543"/>
    </location>
</feature>
<feature type="helix" evidence="9">
    <location>
        <begin position="546"/>
        <end position="548"/>
    </location>
</feature>
<feature type="strand" evidence="9">
    <location>
        <begin position="552"/>
        <end position="555"/>
    </location>
</feature>
<feature type="turn" evidence="9">
    <location>
        <begin position="556"/>
        <end position="558"/>
    </location>
</feature>
<feature type="strand" evidence="9">
    <location>
        <begin position="570"/>
        <end position="574"/>
    </location>
</feature>
<feature type="strand" evidence="9">
    <location>
        <begin position="579"/>
        <end position="585"/>
    </location>
</feature>
<name>TRES_MYCTU</name>
<protein>
    <recommendedName>
        <fullName evidence="7">Trehalose synthase/amylase TreS</fullName>
        <ecNumber evidence="4">3.2.1.1</ecNumber>
        <ecNumber evidence="4">5.4.99.16</ecNumber>
    </recommendedName>
    <alternativeName>
        <fullName evidence="7">Maltose alpha-D-glucosyltransferase</fullName>
        <shortName evidence="7">MTase</shortName>
    </alternativeName>
</protein>
<organism>
    <name type="scientific">Mycobacterium tuberculosis (strain ATCC 25618 / H37Rv)</name>
    <dbReference type="NCBI Taxonomy" id="83332"/>
    <lineage>
        <taxon>Bacteria</taxon>
        <taxon>Bacillati</taxon>
        <taxon>Actinomycetota</taxon>
        <taxon>Actinomycetes</taxon>
        <taxon>Mycobacteriales</taxon>
        <taxon>Mycobacteriaceae</taxon>
        <taxon>Mycobacterium</taxon>
        <taxon>Mycobacterium tuberculosis complex</taxon>
    </lineage>
</organism>
<accession>P9WQ19</accession>
<accession>L0T5R2</accession>
<accession>O07176</accession>
<accession>Q7DAF7</accession>
<sequence length="601" mass="68593">MNEAEHSVEHPPVQGSHVEGGVVEHPDAKDFGSAAALPADPTWFKHAVFYEVLVRAFFDASADGSGDLRGLIDRLDYLQWLGIDCIWLPPFYDSPLRDGGYDIRDFYKVLPEFGTVDDFVALVDAAHRRGIRIITDLVMNHTSESHPWFQESRRDPDGPYGDYYVWSDTSERYTDARIIFVDTEESNWSFDPVRRQFYWHRFFSHQPDLNYDNPAVQEAMIDVIRFWLGLGIDGFRLDAVPYLFEREGTNCENLPETHAFLKRVRKVVDDEFPGRVLLAEANQWPGDVVEYFGDPNTGGDECHMAFHFPLMPRIFMAVRRESRFPISEIIAQTPPIPDMAQWGIFLRNHDELTLEMVTDEERDYMYAEYAKDPRMKANVGIRRRLAPLLDNDRNQIELFTALLLSLPGSPVLYYGDEIGMGDVIWLGDRDGVRIPMQWTPDRNAGFSTANPGRLYLPPSQDPVYGYQAVNVEAQRDTSTSLLNFTRTMLAVRRRHPAFAVGAFQELGGSNPSVLAYVRQVAGDDGDTVLCVNNLSRFPQPIELDLQQWTNYTPVELTGHVEFPRIGQVPYLLTLPGHGFYWFQLTTHEVGAPPTCGGERRL</sequence>